<comment type="function">
    <text evidence="1">NDH-1 shuttles electrons from NADH, via FMN and iron-sulfur (Fe-S) centers, to quinones in the respiratory chain. The immediate electron acceptor for the enzyme in this species is believed to be ubiquinone. Couples the redox reaction to proton translocation (for every two electrons transferred, four hydrogen ions are translocated across the cytoplasmic membrane), and thus conserves the redox energy in a proton gradient.</text>
</comment>
<comment type="catalytic activity">
    <reaction evidence="1">
        <text>a quinone + NADH + 5 H(+)(in) = a quinol + NAD(+) + 4 H(+)(out)</text>
        <dbReference type="Rhea" id="RHEA:57888"/>
        <dbReference type="ChEBI" id="CHEBI:15378"/>
        <dbReference type="ChEBI" id="CHEBI:24646"/>
        <dbReference type="ChEBI" id="CHEBI:57540"/>
        <dbReference type="ChEBI" id="CHEBI:57945"/>
        <dbReference type="ChEBI" id="CHEBI:132124"/>
    </reaction>
</comment>
<comment type="subunit">
    <text evidence="1">NDH-1 is composed of 13 different subunits. Subunits NuoA, H, J, K, L, M, N constitute the membrane sector of the complex.</text>
</comment>
<comment type="subcellular location">
    <subcellularLocation>
        <location evidence="1">Cell inner membrane</location>
        <topology evidence="1">Multi-pass membrane protein</topology>
    </subcellularLocation>
</comment>
<comment type="similarity">
    <text evidence="1">Belongs to the complex I subunit 2 family.</text>
</comment>
<accession>Q0TFH0</accession>
<name>NUON_ECOL5</name>
<sequence>MTITPQNLIALLPLLIVGLTVVVVMLSIAWRRNHFLNATLSVIGLNAALVSLWFVGQAGAMDVTPLMRVDGFAMLYTGLVLLASLATCTFAYPWLEDYNDNKDEFYLLVLIAALGGILLANANHLASLFLGIELISLPLFGLVGYAFRQKRSLEASIKYTILSAAASSFLLFGMALVYAQSGDLSFVALGKNLGDGMLNEPLLLAGFGLMIVGLGFKLSLVPFHLWTPDVYQGAPAPVSTFLATASKIAIFGVVMRLFLYAPVGDSEAIRVVLAIIAFASIIFGNLMALSQTNIKRLLGYSSISHLGYLLVALIALQTGEMSMEAVGVYLVGYLFSSLGAFGVVSLMSSPYRGPDADSLFSYRGLFWHRPILAAVMTVMMLSLAGIPMTLGFIGKFYVLAVGVQAHLWWLVGAVVVGSAIGLYYYLRVAVSLYLHAPEQPGRDAPSNWQYSAGGIVVLISALLVLVLGVWPQPLISIVRLAMPLM</sequence>
<keyword id="KW-0997">Cell inner membrane</keyword>
<keyword id="KW-1003">Cell membrane</keyword>
<keyword id="KW-0472">Membrane</keyword>
<keyword id="KW-0520">NAD</keyword>
<keyword id="KW-0874">Quinone</keyword>
<keyword id="KW-1278">Translocase</keyword>
<keyword id="KW-0812">Transmembrane</keyword>
<keyword id="KW-1133">Transmembrane helix</keyword>
<keyword id="KW-0813">Transport</keyword>
<keyword id="KW-0830">Ubiquinone</keyword>
<protein>
    <recommendedName>
        <fullName evidence="1">NADH-quinone oxidoreductase subunit N</fullName>
        <ecNumber evidence="1">7.1.1.-</ecNumber>
    </recommendedName>
    <alternativeName>
        <fullName evidence="1">NADH dehydrogenase I subunit N</fullName>
    </alternativeName>
    <alternativeName>
        <fullName evidence="1">NDH-1 subunit N</fullName>
    </alternativeName>
</protein>
<gene>
    <name evidence="1" type="primary">nuoN</name>
    <name type="ordered locus">ECP_2315</name>
</gene>
<feature type="chain" id="PRO_1000017377" description="NADH-quinone oxidoreductase subunit N">
    <location>
        <begin position="1"/>
        <end position="485"/>
    </location>
</feature>
<feature type="transmembrane region" description="Helical" evidence="1">
    <location>
        <begin position="8"/>
        <end position="28"/>
    </location>
</feature>
<feature type="transmembrane region" description="Helical" evidence="1">
    <location>
        <begin position="35"/>
        <end position="55"/>
    </location>
</feature>
<feature type="transmembrane region" description="Helical" evidence="1">
    <location>
        <begin position="71"/>
        <end position="91"/>
    </location>
</feature>
<feature type="transmembrane region" description="Helical" evidence="1">
    <location>
        <begin position="105"/>
        <end position="125"/>
    </location>
</feature>
<feature type="transmembrane region" description="Helical" evidence="1">
    <location>
        <begin position="127"/>
        <end position="147"/>
    </location>
</feature>
<feature type="transmembrane region" description="Helical" evidence="1">
    <location>
        <begin position="159"/>
        <end position="179"/>
    </location>
</feature>
<feature type="transmembrane region" description="Helical" evidence="1">
    <location>
        <begin position="203"/>
        <end position="223"/>
    </location>
</feature>
<feature type="transmembrane region" description="Helical" evidence="1">
    <location>
        <begin position="235"/>
        <end position="255"/>
    </location>
</feature>
<feature type="transmembrane region" description="Helical" evidence="1">
    <location>
        <begin position="271"/>
        <end position="291"/>
    </location>
</feature>
<feature type="transmembrane region" description="Helical" evidence="1">
    <location>
        <begin position="297"/>
        <end position="317"/>
    </location>
</feature>
<feature type="transmembrane region" description="Helical" evidence="1">
    <location>
        <begin position="326"/>
        <end position="346"/>
    </location>
</feature>
<feature type="transmembrane region" description="Helical" evidence="1">
    <location>
        <begin position="373"/>
        <end position="393"/>
    </location>
</feature>
<feature type="transmembrane region" description="Helical" evidence="1">
    <location>
        <begin position="408"/>
        <end position="430"/>
    </location>
</feature>
<feature type="transmembrane region" description="Helical" evidence="1">
    <location>
        <begin position="455"/>
        <end position="475"/>
    </location>
</feature>
<dbReference type="EC" id="7.1.1.-" evidence="1"/>
<dbReference type="EMBL" id="CP000247">
    <property type="protein sequence ID" value="ABG70309.1"/>
    <property type="molecule type" value="Genomic_DNA"/>
</dbReference>
<dbReference type="RefSeq" id="WP_000156680.1">
    <property type="nucleotide sequence ID" value="NC_008253.1"/>
</dbReference>
<dbReference type="SMR" id="Q0TFH0"/>
<dbReference type="KEGG" id="ecp:ECP_2315"/>
<dbReference type="HOGENOM" id="CLU_007100_1_5_6"/>
<dbReference type="Proteomes" id="UP000009182">
    <property type="component" value="Chromosome"/>
</dbReference>
<dbReference type="GO" id="GO:0005886">
    <property type="term" value="C:plasma membrane"/>
    <property type="evidence" value="ECO:0007669"/>
    <property type="project" value="UniProtKB-SubCell"/>
</dbReference>
<dbReference type="GO" id="GO:0008137">
    <property type="term" value="F:NADH dehydrogenase (ubiquinone) activity"/>
    <property type="evidence" value="ECO:0007669"/>
    <property type="project" value="InterPro"/>
</dbReference>
<dbReference type="GO" id="GO:0050136">
    <property type="term" value="F:NADH:ubiquinone reductase (non-electrogenic) activity"/>
    <property type="evidence" value="ECO:0007669"/>
    <property type="project" value="UniProtKB-UniRule"/>
</dbReference>
<dbReference type="GO" id="GO:0048038">
    <property type="term" value="F:quinone binding"/>
    <property type="evidence" value="ECO:0007669"/>
    <property type="project" value="UniProtKB-KW"/>
</dbReference>
<dbReference type="GO" id="GO:0042773">
    <property type="term" value="P:ATP synthesis coupled electron transport"/>
    <property type="evidence" value="ECO:0007669"/>
    <property type="project" value="InterPro"/>
</dbReference>
<dbReference type="HAMAP" id="MF_00445">
    <property type="entry name" value="NDH1_NuoN_1"/>
    <property type="match status" value="1"/>
</dbReference>
<dbReference type="InterPro" id="IPR010096">
    <property type="entry name" value="NADH-Q_OxRdtase_suN/2"/>
</dbReference>
<dbReference type="InterPro" id="IPR001750">
    <property type="entry name" value="ND/Mrp_TM"/>
</dbReference>
<dbReference type="NCBIfam" id="TIGR01770">
    <property type="entry name" value="NDH_I_N"/>
    <property type="match status" value="1"/>
</dbReference>
<dbReference type="NCBIfam" id="NF004439">
    <property type="entry name" value="PRK05777.1-1"/>
    <property type="match status" value="1"/>
</dbReference>
<dbReference type="PANTHER" id="PTHR22773">
    <property type="entry name" value="NADH DEHYDROGENASE"/>
    <property type="match status" value="1"/>
</dbReference>
<dbReference type="Pfam" id="PF00361">
    <property type="entry name" value="Proton_antipo_M"/>
    <property type="match status" value="1"/>
</dbReference>
<reference key="1">
    <citation type="journal article" date="2006" name="Mol. Microbiol.">
        <title>Role of pathogenicity island-associated integrases in the genome plasticity of uropathogenic Escherichia coli strain 536.</title>
        <authorList>
            <person name="Hochhut B."/>
            <person name="Wilde C."/>
            <person name="Balling G."/>
            <person name="Middendorf B."/>
            <person name="Dobrindt U."/>
            <person name="Brzuszkiewicz E."/>
            <person name="Gottschalk G."/>
            <person name="Carniel E."/>
            <person name="Hacker J."/>
        </authorList>
    </citation>
    <scope>NUCLEOTIDE SEQUENCE [LARGE SCALE GENOMIC DNA]</scope>
    <source>
        <strain>536 / UPEC</strain>
    </source>
</reference>
<organism>
    <name type="scientific">Escherichia coli O6:K15:H31 (strain 536 / UPEC)</name>
    <dbReference type="NCBI Taxonomy" id="362663"/>
    <lineage>
        <taxon>Bacteria</taxon>
        <taxon>Pseudomonadati</taxon>
        <taxon>Pseudomonadota</taxon>
        <taxon>Gammaproteobacteria</taxon>
        <taxon>Enterobacterales</taxon>
        <taxon>Enterobacteriaceae</taxon>
        <taxon>Escherichia</taxon>
    </lineage>
</organism>
<proteinExistence type="inferred from homology"/>
<evidence type="ECO:0000255" key="1">
    <source>
        <dbReference type="HAMAP-Rule" id="MF_00445"/>
    </source>
</evidence>